<sequence length="159" mass="17666">MSFRIGHGYDVHKFTSAKQNIIIGGVEIAYHLGLEAHSDGDVLIHALCDAILGALGLGDIGKHFLDTDNQFKNIDSKFFLAEIKKMLDEKQYSISNIDCTIIAQAPKMLPHIEKMRACLANILEIQISQINIKATTTERLGFIGREEGIATHVVCLLYR</sequence>
<accession>Q2A3Z7</accession>
<keyword id="KW-0414">Isoprene biosynthesis</keyword>
<keyword id="KW-0456">Lyase</keyword>
<keyword id="KW-0479">Metal-binding</keyword>
<keyword id="KW-1185">Reference proteome</keyword>
<name>ISPF_FRATH</name>
<evidence type="ECO:0000255" key="1">
    <source>
        <dbReference type="HAMAP-Rule" id="MF_00107"/>
    </source>
</evidence>
<dbReference type="EC" id="4.6.1.12" evidence="1"/>
<dbReference type="EMBL" id="AM233362">
    <property type="protein sequence ID" value="CAJ79272.1"/>
    <property type="molecule type" value="Genomic_DNA"/>
</dbReference>
<dbReference type="RefSeq" id="WP_003015413.1">
    <property type="nucleotide sequence ID" value="NZ_CP009694.1"/>
</dbReference>
<dbReference type="SMR" id="Q2A3Z7"/>
<dbReference type="KEGG" id="ftl:FTL_0833"/>
<dbReference type="UniPathway" id="UPA00056">
    <property type="reaction ID" value="UER00095"/>
</dbReference>
<dbReference type="Proteomes" id="UP000001944">
    <property type="component" value="Chromosome"/>
</dbReference>
<dbReference type="GO" id="GO:0008685">
    <property type="term" value="F:2-C-methyl-D-erythritol 2,4-cyclodiphosphate synthase activity"/>
    <property type="evidence" value="ECO:0007669"/>
    <property type="project" value="UniProtKB-UniRule"/>
</dbReference>
<dbReference type="GO" id="GO:0046872">
    <property type="term" value="F:metal ion binding"/>
    <property type="evidence" value="ECO:0007669"/>
    <property type="project" value="UniProtKB-KW"/>
</dbReference>
<dbReference type="GO" id="GO:0019288">
    <property type="term" value="P:isopentenyl diphosphate biosynthetic process, methylerythritol 4-phosphate pathway"/>
    <property type="evidence" value="ECO:0007669"/>
    <property type="project" value="UniProtKB-UniRule"/>
</dbReference>
<dbReference type="GO" id="GO:0016114">
    <property type="term" value="P:terpenoid biosynthetic process"/>
    <property type="evidence" value="ECO:0007669"/>
    <property type="project" value="InterPro"/>
</dbReference>
<dbReference type="CDD" id="cd00554">
    <property type="entry name" value="MECDP_synthase"/>
    <property type="match status" value="1"/>
</dbReference>
<dbReference type="FunFam" id="3.30.1330.50:FF:000001">
    <property type="entry name" value="2-C-methyl-D-erythritol 2,4-cyclodiphosphate synthase"/>
    <property type="match status" value="1"/>
</dbReference>
<dbReference type="Gene3D" id="3.30.1330.50">
    <property type="entry name" value="2-C-methyl-D-erythritol 2,4-cyclodiphosphate synthase"/>
    <property type="match status" value="1"/>
</dbReference>
<dbReference type="HAMAP" id="MF_00107">
    <property type="entry name" value="IspF"/>
    <property type="match status" value="1"/>
</dbReference>
<dbReference type="InterPro" id="IPR003526">
    <property type="entry name" value="MECDP_synthase"/>
</dbReference>
<dbReference type="InterPro" id="IPR020555">
    <property type="entry name" value="MECDP_synthase_CS"/>
</dbReference>
<dbReference type="InterPro" id="IPR036571">
    <property type="entry name" value="MECDP_synthase_sf"/>
</dbReference>
<dbReference type="NCBIfam" id="TIGR00151">
    <property type="entry name" value="ispF"/>
    <property type="match status" value="1"/>
</dbReference>
<dbReference type="PANTHER" id="PTHR43181">
    <property type="entry name" value="2-C-METHYL-D-ERYTHRITOL 2,4-CYCLODIPHOSPHATE SYNTHASE, CHLOROPLASTIC"/>
    <property type="match status" value="1"/>
</dbReference>
<dbReference type="PANTHER" id="PTHR43181:SF1">
    <property type="entry name" value="2-C-METHYL-D-ERYTHRITOL 2,4-CYCLODIPHOSPHATE SYNTHASE, CHLOROPLASTIC"/>
    <property type="match status" value="1"/>
</dbReference>
<dbReference type="Pfam" id="PF02542">
    <property type="entry name" value="YgbB"/>
    <property type="match status" value="1"/>
</dbReference>
<dbReference type="SUPFAM" id="SSF69765">
    <property type="entry name" value="IpsF-like"/>
    <property type="match status" value="1"/>
</dbReference>
<dbReference type="PROSITE" id="PS01350">
    <property type="entry name" value="ISPF"/>
    <property type="match status" value="1"/>
</dbReference>
<gene>
    <name evidence="1" type="primary">ispF</name>
    <name type="ordered locus">FTL_0833</name>
</gene>
<protein>
    <recommendedName>
        <fullName evidence="1">2-C-methyl-D-erythritol 2,4-cyclodiphosphate synthase</fullName>
        <shortName evidence="1">MECDP-synthase</shortName>
        <shortName evidence="1">MECPP-synthase</shortName>
        <shortName evidence="1">MECPS</shortName>
        <ecNumber evidence="1">4.6.1.12</ecNumber>
    </recommendedName>
</protein>
<reference key="1">
    <citation type="submission" date="2006-03" db="EMBL/GenBank/DDBJ databases">
        <title>Complete genome sequence of Francisella tularensis LVS (Live Vaccine Strain).</title>
        <authorList>
            <person name="Chain P."/>
            <person name="Larimer F."/>
            <person name="Land M."/>
            <person name="Stilwagen S."/>
            <person name="Larsson P."/>
            <person name="Bearden S."/>
            <person name="Chu M."/>
            <person name="Oyston P."/>
            <person name="Forsman M."/>
            <person name="Andersson S."/>
            <person name="Lindler L."/>
            <person name="Titball R."/>
            <person name="Garcia E."/>
        </authorList>
    </citation>
    <scope>NUCLEOTIDE SEQUENCE [LARGE SCALE GENOMIC DNA]</scope>
    <source>
        <strain>LVS</strain>
    </source>
</reference>
<proteinExistence type="inferred from homology"/>
<feature type="chain" id="PRO_1000022838" description="2-C-methyl-D-erythritol 2,4-cyclodiphosphate synthase">
    <location>
        <begin position="1"/>
        <end position="159"/>
    </location>
</feature>
<feature type="binding site" evidence="1">
    <location>
        <begin position="10"/>
        <end position="12"/>
    </location>
    <ligand>
        <name>4-CDP-2-C-methyl-D-erythritol 2-phosphate</name>
        <dbReference type="ChEBI" id="CHEBI:57919"/>
    </ligand>
</feature>
<feature type="binding site" evidence="1">
    <location>
        <position position="10"/>
    </location>
    <ligand>
        <name>a divalent metal cation</name>
        <dbReference type="ChEBI" id="CHEBI:60240"/>
    </ligand>
</feature>
<feature type="binding site" evidence="1">
    <location>
        <position position="12"/>
    </location>
    <ligand>
        <name>a divalent metal cation</name>
        <dbReference type="ChEBI" id="CHEBI:60240"/>
    </ligand>
</feature>
<feature type="binding site" evidence="1">
    <location>
        <begin position="37"/>
        <end position="38"/>
    </location>
    <ligand>
        <name>4-CDP-2-C-methyl-D-erythritol 2-phosphate</name>
        <dbReference type="ChEBI" id="CHEBI:57919"/>
    </ligand>
</feature>
<feature type="binding site" evidence="1">
    <location>
        <position position="45"/>
    </location>
    <ligand>
        <name>a divalent metal cation</name>
        <dbReference type="ChEBI" id="CHEBI:60240"/>
    </ligand>
</feature>
<feature type="binding site" evidence="1">
    <location>
        <begin position="59"/>
        <end position="61"/>
    </location>
    <ligand>
        <name>4-CDP-2-C-methyl-D-erythritol 2-phosphate</name>
        <dbReference type="ChEBI" id="CHEBI:57919"/>
    </ligand>
</feature>
<feature type="binding site" evidence="1">
    <location>
        <begin position="64"/>
        <end position="68"/>
    </location>
    <ligand>
        <name>4-CDP-2-C-methyl-D-erythritol 2-phosphate</name>
        <dbReference type="ChEBI" id="CHEBI:57919"/>
    </ligand>
</feature>
<feature type="binding site" evidence="1">
    <location>
        <begin position="103"/>
        <end position="109"/>
    </location>
    <ligand>
        <name>4-CDP-2-C-methyl-D-erythritol 2-phosphate</name>
        <dbReference type="ChEBI" id="CHEBI:57919"/>
    </ligand>
</feature>
<feature type="binding site" evidence="1">
    <location>
        <begin position="135"/>
        <end position="138"/>
    </location>
    <ligand>
        <name>4-CDP-2-C-methyl-D-erythritol 2-phosphate</name>
        <dbReference type="ChEBI" id="CHEBI:57919"/>
    </ligand>
</feature>
<feature type="binding site" evidence="1">
    <location>
        <position position="142"/>
    </location>
    <ligand>
        <name>4-CDP-2-C-methyl-D-erythritol 2-phosphate</name>
        <dbReference type="ChEBI" id="CHEBI:57919"/>
    </ligand>
</feature>
<feature type="binding site" evidence="1">
    <location>
        <position position="145"/>
    </location>
    <ligand>
        <name>4-CDP-2-C-methyl-D-erythritol 2-phosphate</name>
        <dbReference type="ChEBI" id="CHEBI:57919"/>
    </ligand>
</feature>
<feature type="site" description="Transition state stabilizer" evidence="1">
    <location>
        <position position="37"/>
    </location>
</feature>
<feature type="site" description="Transition state stabilizer" evidence="1">
    <location>
        <position position="136"/>
    </location>
</feature>
<comment type="function">
    <text evidence="1">Involved in the biosynthesis of isopentenyl diphosphate (IPP) and dimethylallyl diphosphate (DMAPP), two major building blocks of isoprenoid compounds. Catalyzes the conversion of 4-diphosphocytidyl-2-C-methyl-D-erythritol 2-phosphate (CDP-ME2P) to 2-C-methyl-D-erythritol 2,4-cyclodiphosphate (ME-CPP) with a corresponding release of cytidine 5-monophosphate (CMP).</text>
</comment>
<comment type="catalytic activity">
    <reaction evidence="1">
        <text>4-CDP-2-C-methyl-D-erythritol 2-phosphate = 2-C-methyl-D-erythritol 2,4-cyclic diphosphate + CMP</text>
        <dbReference type="Rhea" id="RHEA:23864"/>
        <dbReference type="ChEBI" id="CHEBI:57919"/>
        <dbReference type="ChEBI" id="CHEBI:58483"/>
        <dbReference type="ChEBI" id="CHEBI:60377"/>
        <dbReference type="EC" id="4.6.1.12"/>
    </reaction>
</comment>
<comment type="cofactor">
    <cofactor evidence="1">
        <name>a divalent metal cation</name>
        <dbReference type="ChEBI" id="CHEBI:60240"/>
    </cofactor>
    <text evidence="1">Binds 1 divalent metal cation per subunit.</text>
</comment>
<comment type="pathway">
    <text evidence="1">Isoprenoid biosynthesis; isopentenyl diphosphate biosynthesis via DXP pathway; isopentenyl diphosphate from 1-deoxy-D-xylulose 5-phosphate: step 4/6.</text>
</comment>
<comment type="subunit">
    <text evidence="1">Homotrimer.</text>
</comment>
<comment type="similarity">
    <text evidence="1">Belongs to the IspF family.</text>
</comment>
<organism>
    <name type="scientific">Francisella tularensis subsp. holarctica (strain LVS)</name>
    <dbReference type="NCBI Taxonomy" id="376619"/>
    <lineage>
        <taxon>Bacteria</taxon>
        <taxon>Pseudomonadati</taxon>
        <taxon>Pseudomonadota</taxon>
        <taxon>Gammaproteobacteria</taxon>
        <taxon>Thiotrichales</taxon>
        <taxon>Francisellaceae</taxon>
        <taxon>Francisella</taxon>
    </lineage>
</organism>